<name>AROQ_XANAC</name>
<evidence type="ECO:0000255" key="1">
    <source>
        <dbReference type="HAMAP-Rule" id="MF_00169"/>
    </source>
</evidence>
<accession>Q8PPZ9</accession>
<sequence length="148" mass="16108">MAHLLLLHGPNLNLLGTREPEVYGRTTLAQIDAALVDRAQAAGHVLHCLQSNAEHVLVERIHAAREDGTAYILINPAAFTHTSVALRDALLGVGLPFVEIHLSNPHAREPFRHHSYLSDKADGVICGFGADSYRLALEAVIARLERDA</sequence>
<dbReference type="EC" id="4.2.1.10" evidence="1"/>
<dbReference type="EMBL" id="AE008923">
    <property type="protein sequence ID" value="AAM35422.1"/>
    <property type="molecule type" value="Genomic_DNA"/>
</dbReference>
<dbReference type="RefSeq" id="WP_003483185.1">
    <property type="nucleotide sequence ID" value="NC_003919.1"/>
</dbReference>
<dbReference type="SMR" id="Q8PPZ9"/>
<dbReference type="GeneID" id="93989765"/>
<dbReference type="KEGG" id="xac:XAC0533"/>
<dbReference type="eggNOG" id="COG0757">
    <property type="taxonomic scope" value="Bacteria"/>
</dbReference>
<dbReference type="HOGENOM" id="CLU_090968_1_0_6"/>
<dbReference type="UniPathway" id="UPA00053">
    <property type="reaction ID" value="UER00086"/>
</dbReference>
<dbReference type="Proteomes" id="UP000000576">
    <property type="component" value="Chromosome"/>
</dbReference>
<dbReference type="GO" id="GO:0003855">
    <property type="term" value="F:3-dehydroquinate dehydratase activity"/>
    <property type="evidence" value="ECO:0007669"/>
    <property type="project" value="UniProtKB-UniRule"/>
</dbReference>
<dbReference type="GO" id="GO:0008652">
    <property type="term" value="P:amino acid biosynthetic process"/>
    <property type="evidence" value="ECO:0007669"/>
    <property type="project" value="UniProtKB-KW"/>
</dbReference>
<dbReference type="GO" id="GO:0009073">
    <property type="term" value="P:aromatic amino acid family biosynthetic process"/>
    <property type="evidence" value="ECO:0007669"/>
    <property type="project" value="UniProtKB-KW"/>
</dbReference>
<dbReference type="GO" id="GO:0009423">
    <property type="term" value="P:chorismate biosynthetic process"/>
    <property type="evidence" value="ECO:0007669"/>
    <property type="project" value="UniProtKB-UniRule"/>
</dbReference>
<dbReference type="GO" id="GO:0019631">
    <property type="term" value="P:quinate catabolic process"/>
    <property type="evidence" value="ECO:0007669"/>
    <property type="project" value="TreeGrafter"/>
</dbReference>
<dbReference type="CDD" id="cd00466">
    <property type="entry name" value="DHQase_II"/>
    <property type="match status" value="1"/>
</dbReference>
<dbReference type="Gene3D" id="3.40.50.9100">
    <property type="entry name" value="Dehydroquinase, class II"/>
    <property type="match status" value="1"/>
</dbReference>
<dbReference type="HAMAP" id="MF_00169">
    <property type="entry name" value="AroQ"/>
    <property type="match status" value="1"/>
</dbReference>
<dbReference type="InterPro" id="IPR001874">
    <property type="entry name" value="DHquinase_II"/>
</dbReference>
<dbReference type="InterPro" id="IPR018509">
    <property type="entry name" value="DHquinase_II_CS"/>
</dbReference>
<dbReference type="InterPro" id="IPR036441">
    <property type="entry name" value="DHquinase_II_sf"/>
</dbReference>
<dbReference type="NCBIfam" id="TIGR01088">
    <property type="entry name" value="aroQ"/>
    <property type="match status" value="1"/>
</dbReference>
<dbReference type="NCBIfam" id="NF003804">
    <property type="entry name" value="PRK05395.1-1"/>
    <property type="match status" value="1"/>
</dbReference>
<dbReference type="NCBIfam" id="NF003805">
    <property type="entry name" value="PRK05395.1-2"/>
    <property type="match status" value="1"/>
</dbReference>
<dbReference type="NCBIfam" id="NF003806">
    <property type="entry name" value="PRK05395.1-3"/>
    <property type="match status" value="1"/>
</dbReference>
<dbReference type="NCBIfam" id="NF003807">
    <property type="entry name" value="PRK05395.1-4"/>
    <property type="match status" value="1"/>
</dbReference>
<dbReference type="PANTHER" id="PTHR21272">
    <property type="entry name" value="CATABOLIC 3-DEHYDROQUINASE"/>
    <property type="match status" value="1"/>
</dbReference>
<dbReference type="PANTHER" id="PTHR21272:SF3">
    <property type="entry name" value="CATABOLIC 3-DEHYDROQUINASE"/>
    <property type="match status" value="1"/>
</dbReference>
<dbReference type="Pfam" id="PF01220">
    <property type="entry name" value="DHquinase_II"/>
    <property type="match status" value="1"/>
</dbReference>
<dbReference type="PIRSF" id="PIRSF001399">
    <property type="entry name" value="DHquinase_II"/>
    <property type="match status" value="1"/>
</dbReference>
<dbReference type="SUPFAM" id="SSF52304">
    <property type="entry name" value="Type II 3-dehydroquinate dehydratase"/>
    <property type="match status" value="1"/>
</dbReference>
<dbReference type="PROSITE" id="PS01029">
    <property type="entry name" value="DEHYDROQUINASE_II"/>
    <property type="match status" value="1"/>
</dbReference>
<reference key="1">
    <citation type="journal article" date="2002" name="Nature">
        <title>Comparison of the genomes of two Xanthomonas pathogens with differing host specificities.</title>
        <authorList>
            <person name="da Silva A.C.R."/>
            <person name="Ferro J.A."/>
            <person name="Reinach F.C."/>
            <person name="Farah C.S."/>
            <person name="Furlan L.R."/>
            <person name="Quaggio R.B."/>
            <person name="Monteiro-Vitorello C.B."/>
            <person name="Van Sluys M.A."/>
            <person name="Almeida N.F. Jr."/>
            <person name="Alves L.M.C."/>
            <person name="do Amaral A.M."/>
            <person name="Bertolini M.C."/>
            <person name="Camargo L.E.A."/>
            <person name="Camarotte G."/>
            <person name="Cannavan F."/>
            <person name="Cardozo J."/>
            <person name="Chambergo F."/>
            <person name="Ciapina L.P."/>
            <person name="Cicarelli R.M.B."/>
            <person name="Coutinho L.L."/>
            <person name="Cursino-Santos J.R."/>
            <person name="El-Dorry H."/>
            <person name="Faria J.B."/>
            <person name="Ferreira A.J.S."/>
            <person name="Ferreira R.C.C."/>
            <person name="Ferro M.I.T."/>
            <person name="Formighieri E.F."/>
            <person name="Franco M.C."/>
            <person name="Greggio C.C."/>
            <person name="Gruber A."/>
            <person name="Katsuyama A.M."/>
            <person name="Kishi L.T."/>
            <person name="Leite R.P."/>
            <person name="Lemos E.G.M."/>
            <person name="Lemos M.V.F."/>
            <person name="Locali E.C."/>
            <person name="Machado M.A."/>
            <person name="Madeira A.M.B.N."/>
            <person name="Martinez-Rossi N.M."/>
            <person name="Martins E.C."/>
            <person name="Meidanis J."/>
            <person name="Menck C.F.M."/>
            <person name="Miyaki C.Y."/>
            <person name="Moon D.H."/>
            <person name="Moreira L.M."/>
            <person name="Novo M.T.M."/>
            <person name="Okura V.K."/>
            <person name="Oliveira M.C."/>
            <person name="Oliveira V.R."/>
            <person name="Pereira H.A."/>
            <person name="Rossi A."/>
            <person name="Sena J.A.D."/>
            <person name="Silva C."/>
            <person name="de Souza R.F."/>
            <person name="Spinola L.A.F."/>
            <person name="Takita M.A."/>
            <person name="Tamura R.E."/>
            <person name="Teixeira E.C."/>
            <person name="Tezza R.I.D."/>
            <person name="Trindade dos Santos M."/>
            <person name="Truffi D."/>
            <person name="Tsai S.M."/>
            <person name="White F.F."/>
            <person name="Setubal J.C."/>
            <person name="Kitajima J.P."/>
        </authorList>
    </citation>
    <scope>NUCLEOTIDE SEQUENCE [LARGE SCALE GENOMIC DNA]</scope>
    <source>
        <strain>306</strain>
    </source>
</reference>
<feature type="chain" id="PRO_0000159942" description="3-dehydroquinate dehydratase">
    <location>
        <begin position="1"/>
        <end position="148"/>
    </location>
</feature>
<feature type="active site" description="Proton acceptor" evidence="1">
    <location>
        <position position="23"/>
    </location>
</feature>
<feature type="active site" description="Proton donor" evidence="1">
    <location>
        <position position="101"/>
    </location>
</feature>
<feature type="binding site" evidence="1">
    <location>
        <position position="75"/>
    </location>
    <ligand>
        <name>substrate</name>
    </ligand>
</feature>
<feature type="binding site" evidence="1">
    <location>
        <position position="81"/>
    </location>
    <ligand>
        <name>substrate</name>
    </ligand>
</feature>
<feature type="binding site" evidence="1">
    <location>
        <position position="88"/>
    </location>
    <ligand>
        <name>substrate</name>
    </ligand>
</feature>
<feature type="binding site" evidence="1">
    <location>
        <begin position="102"/>
        <end position="103"/>
    </location>
    <ligand>
        <name>substrate</name>
    </ligand>
</feature>
<feature type="binding site" evidence="1">
    <location>
        <position position="112"/>
    </location>
    <ligand>
        <name>substrate</name>
    </ligand>
</feature>
<feature type="site" description="Transition state stabilizer" evidence="1">
    <location>
        <position position="18"/>
    </location>
</feature>
<keyword id="KW-0028">Amino-acid biosynthesis</keyword>
<keyword id="KW-0057">Aromatic amino acid biosynthesis</keyword>
<keyword id="KW-0456">Lyase</keyword>
<proteinExistence type="inferred from homology"/>
<comment type="function">
    <text evidence="1">Catalyzes a trans-dehydration via an enolate intermediate.</text>
</comment>
<comment type="catalytic activity">
    <reaction evidence="1">
        <text>3-dehydroquinate = 3-dehydroshikimate + H2O</text>
        <dbReference type="Rhea" id="RHEA:21096"/>
        <dbReference type="ChEBI" id="CHEBI:15377"/>
        <dbReference type="ChEBI" id="CHEBI:16630"/>
        <dbReference type="ChEBI" id="CHEBI:32364"/>
        <dbReference type="EC" id="4.2.1.10"/>
    </reaction>
</comment>
<comment type="pathway">
    <text evidence="1">Metabolic intermediate biosynthesis; chorismate biosynthesis; chorismate from D-erythrose 4-phosphate and phosphoenolpyruvate: step 3/7.</text>
</comment>
<comment type="subunit">
    <text evidence="1">Homododecamer.</text>
</comment>
<comment type="similarity">
    <text evidence="1">Belongs to the type-II 3-dehydroquinase family.</text>
</comment>
<protein>
    <recommendedName>
        <fullName evidence="1">3-dehydroquinate dehydratase</fullName>
        <shortName evidence="1">3-dehydroquinase</shortName>
        <ecNumber evidence="1">4.2.1.10</ecNumber>
    </recommendedName>
    <alternativeName>
        <fullName evidence="1">Type II DHQase</fullName>
    </alternativeName>
</protein>
<organism>
    <name type="scientific">Xanthomonas axonopodis pv. citri (strain 306)</name>
    <dbReference type="NCBI Taxonomy" id="190486"/>
    <lineage>
        <taxon>Bacteria</taxon>
        <taxon>Pseudomonadati</taxon>
        <taxon>Pseudomonadota</taxon>
        <taxon>Gammaproteobacteria</taxon>
        <taxon>Lysobacterales</taxon>
        <taxon>Lysobacteraceae</taxon>
        <taxon>Xanthomonas</taxon>
    </lineage>
</organism>
<gene>
    <name evidence="1" type="primary">aroQ</name>
    <name type="ordered locus">XAC0533</name>
</gene>